<protein>
    <recommendedName>
        <fullName evidence="7">Isoamylase 3, chloroplastic</fullName>
        <shortName evidence="6">OsISA3</shortName>
        <ecNumber evidence="5">3.2.1.68</ecNumber>
    </recommendedName>
</protein>
<evidence type="ECO:0000250" key="1">
    <source>
        <dbReference type="UniProtKB" id="P04746"/>
    </source>
</evidence>
<evidence type="ECO:0000255" key="2"/>
<evidence type="ECO:0000256" key="3">
    <source>
        <dbReference type="SAM" id="MobiDB-lite"/>
    </source>
</evidence>
<evidence type="ECO:0000269" key="4">
    <source>
    </source>
</evidence>
<evidence type="ECO:0000269" key="5">
    <source>
    </source>
</evidence>
<evidence type="ECO:0000303" key="6">
    <source>
    </source>
</evidence>
<evidence type="ECO:0000305" key="7"/>
<evidence type="ECO:0000312" key="8">
    <source>
        <dbReference type="EMBL" id="BAD19754.1"/>
    </source>
</evidence>
<evidence type="ECO:0000312" key="9">
    <source>
        <dbReference type="EMBL" id="BAD22265.1"/>
    </source>
</evidence>
<evidence type="ECO:0000312" key="10">
    <source>
        <dbReference type="EMBL" id="BAT08543.1"/>
    </source>
</evidence>
<evidence type="ECO:0000312" key="11">
    <source>
        <dbReference type="EMBL" id="EEE69882.1"/>
    </source>
</evidence>
<proteinExistence type="evidence at transcript level"/>
<accession>B9G434</accession>
<accession>A0A0P0XN30</accession>
<accession>Q0J118</accession>
<accession>Q6K4A4</accession>
<feature type="transit peptide" description="Chloroplast" evidence="2">
    <location>
        <begin position="1"/>
        <end position="68"/>
    </location>
</feature>
<feature type="chain" id="PRO_0000441800" description="Isoamylase 3, chloroplastic">
    <location>
        <begin position="69"/>
        <end position="782"/>
    </location>
</feature>
<feature type="region of interest" description="Disordered" evidence="3">
    <location>
        <begin position="68"/>
        <end position="88"/>
    </location>
</feature>
<feature type="compositionally biased region" description="Polar residues" evidence="3">
    <location>
        <begin position="68"/>
        <end position="81"/>
    </location>
</feature>
<feature type="active site" description="Nucleophile" evidence="1">
    <location>
        <position position="445"/>
    </location>
</feature>
<feature type="active site" description="Proton donor" evidence="1">
    <location>
        <position position="482"/>
    </location>
</feature>
<feature type="site" description="Transition state stabilizer" evidence="1">
    <location>
        <position position="555"/>
    </location>
</feature>
<dbReference type="EC" id="3.2.1.68" evidence="5"/>
<dbReference type="EMBL" id="AP005399">
    <property type="protein sequence ID" value="BAD19754.1"/>
    <property type="status" value="ALT_SEQ"/>
    <property type="molecule type" value="Genomic_DNA"/>
</dbReference>
<dbReference type="EMBL" id="AP005574">
    <property type="protein sequence ID" value="BAD22265.1"/>
    <property type="status" value="ALT_SEQ"/>
    <property type="molecule type" value="Genomic_DNA"/>
</dbReference>
<dbReference type="EMBL" id="AP008215">
    <property type="protein sequence ID" value="BAF25347.1"/>
    <property type="status" value="ALT_SEQ"/>
    <property type="molecule type" value="Genomic_DNA"/>
</dbReference>
<dbReference type="EMBL" id="AP014965">
    <property type="protein sequence ID" value="BAT08543.1"/>
    <property type="status" value="ALT_SEQ"/>
    <property type="molecule type" value="Genomic_DNA"/>
</dbReference>
<dbReference type="EMBL" id="CM000146">
    <property type="protein sequence ID" value="EEE69882.1"/>
    <property type="molecule type" value="Genomic_DNA"/>
</dbReference>
<dbReference type="EMBL" id="AK101554">
    <property type="protein sequence ID" value="BAG95120.1"/>
    <property type="molecule type" value="mRNA"/>
</dbReference>
<dbReference type="RefSeq" id="XP_015612255.1">
    <property type="nucleotide sequence ID" value="XM_015756769.1"/>
</dbReference>
<dbReference type="SMR" id="B9G434"/>
<dbReference type="FunCoup" id="B9G434">
    <property type="interactions" value="160"/>
</dbReference>
<dbReference type="STRING" id="39947.B9G434"/>
<dbReference type="CAZy" id="CBM48">
    <property type="family name" value="Carbohydrate-Binding Module Family 48"/>
</dbReference>
<dbReference type="CAZy" id="GH13">
    <property type="family name" value="Glycoside Hydrolase Family 13"/>
</dbReference>
<dbReference type="PaxDb" id="39947-B9G434"/>
<dbReference type="KEGG" id="dosa:Os09g0469400"/>
<dbReference type="eggNOG" id="KOG0470">
    <property type="taxonomic scope" value="Eukaryota"/>
</dbReference>
<dbReference type="HOGENOM" id="CLU_063553_0_0_1"/>
<dbReference type="InParanoid" id="B9G434"/>
<dbReference type="OrthoDB" id="204980at2759"/>
<dbReference type="Proteomes" id="UP000000763">
    <property type="component" value="Chromosome 9"/>
</dbReference>
<dbReference type="Proteomes" id="UP000007752">
    <property type="component" value="Chromosome 9"/>
</dbReference>
<dbReference type="Proteomes" id="UP000059680">
    <property type="component" value="Chromosome 9"/>
</dbReference>
<dbReference type="GO" id="GO:0009501">
    <property type="term" value="C:amyloplast"/>
    <property type="evidence" value="ECO:0000314"/>
    <property type="project" value="UniProtKB"/>
</dbReference>
<dbReference type="GO" id="GO:0009507">
    <property type="term" value="C:chloroplast"/>
    <property type="evidence" value="ECO:0007669"/>
    <property type="project" value="UniProtKB-SubCell"/>
</dbReference>
<dbReference type="GO" id="GO:0019156">
    <property type="term" value="F:isoamylase activity"/>
    <property type="evidence" value="ECO:0000314"/>
    <property type="project" value="UniProtKB"/>
</dbReference>
<dbReference type="GO" id="GO:0009660">
    <property type="term" value="P:amyloplast organization"/>
    <property type="evidence" value="ECO:0000315"/>
    <property type="project" value="UniProtKB"/>
</dbReference>
<dbReference type="GO" id="GO:0019252">
    <property type="term" value="P:starch biosynthetic process"/>
    <property type="evidence" value="ECO:0007669"/>
    <property type="project" value="UniProtKB-KW"/>
</dbReference>
<dbReference type="GO" id="GO:0005983">
    <property type="term" value="P:starch catabolic process"/>
    <property type="evidence" value="ECO:0000314"/>
    <property type="project" value="UniProtKB"/>
</dbReference>
<dbReference type="CDD" id="cd11326">
    <property type="entry name" value="AmyAc_Glg_debranch"/>
    <property type="match status" value="1"/>
</dbReference>
<dbReference type="CDD" id="cd02856">
    <property type="entry name" value="E_set_GDE_Isoamylase_N"/>
    <property type="match status" value="1"/>
</dbReference>
<dbReference type="FunFam" id="3.20.20.80:FF:000054">
    <property type="entry name" value="Glycogen debranching enzyme"/>
    <property type="match status" value="1"/>
</dbReference>
<dbReference type="FunFam" id="2.60.40.10:FF:001593">
    <property type="entry name" value="Isoamylase 1, chloroplastic"/>
    <property type="match status" value="1"/>
</dbReference>
<dbReference type="FunFam" id="2.60.40.1180:FF:000043">
    <property type="entry name" value="Isoamylase 3, chloroplastic"/>
    <property type="match status" value="1"/>
</dbReference>
<dbReference type="Gene3D" id="3.20.20.80">
    <property type="entry name" value="Glycosidases"/>
    <property type="match status" value="1"/>
</dbReference>
<dbReference type="Gene3D" id="2.60.40.1180">
    <property type="entry name" value="Golgi alpha-mannosidase II"/>
    <property type="match status" value="1"/>
</dbReference>
<dbReference type="Gene3D" id="2.60.40.10">
    <property type="entry name" value="Immunoglobulins"/>
    <property type="match status" value="1"/>
</dbReference>
<dbReference type="InterPro" id="IPR044505">
    <property type="entry name" value="GlgX_Isoamylase_N_E_set"/>
</dbReference>
<dbReference type="InterPro" id="IPR006047">
    <property type="entry name" value="Glyco_hydro_13_cat_dom"/>
</dbReference>
<dbReference type="InterPro" id="IPR004193">
    <property type="entry name" value="Glyco_hydro_13_N"/>
</dbReference>
<dbReference type="InterPro" id="IPR013780">
    <property type="entry name" value="Glyco_hydro_b"/>
</dbReference>
<dbReference type="InterPro" id="IPR017853">
    <property type="entry name" value="Glycoside_hydrolase_SF"/>
</dbReference>
<dbReference type="InterPro" id="IPR013783">
    <property type="entry name" value="Ig-like_fold"/>
</dbReference>
<dbReference type="InterPro" id="IPR014756">
    <property type="entry name" value="Ig_E-set"/>
</dbReference>
<dbReference type="InterPro" id="IPR048650">
    <property type="entry name" value="ISOA1-3-like_C"/>
</dbReference>
<dbReference type="PANTHER" id="PTHR43002">
    <property type="entry name" value="GLYCOGEN DEBRANCHING ENZYME"/>
    <property type="match status" value="1"/>
</dbReference>
<dbReference type="Pfam" id="PF00128">
    <property type="entry name" value="Alpha-amylase"/>
    <property type="match status" value="1"/>
</dbReference>
<dbReference type="Pfam" id="PF02922">
    <property type="entry name" value="CBM_48"/>
    <property type="match status" value="1"/>
</dbReference>
<dbReference type="Pfam" id="PF21156">
    <property type="entry name" value="ISOA1-3_C"/>
    <property type="match status" value="1"/>
</dbReference>
<dbReference type="SMART" id="SM00642">
    <property type="entry name" value="Aamy"/>
    <property type="match status" value="1"/>
</dbReference>
<dbReference type="SUPFAM" id="SSF51445">
    <property type="entry name" value="(Trans)glycosidases"/>
    <property type="match status" value="1"/>
</dbReference>
<dbReference type="SUPFAM" id="SSF81296">
    <property type="entry name" value="E set domains"/>
    <property type="match status" value="1"/>
</dbReference>
<dbReference type="SUPFAM" id="SSF51011">
    <property type="entry name" value="Glycosyl hydrolase domain"/>
    <property type="match status" value="1"/>
</dbReference>
<organism>
    <name type="scientific">Oryza sativa subsp. japonica</name>
    <name type="common">Rice</name>
    <dbReference type="NCBI Taxonomy" id="39947"/>
    <lineage>
        <taxon>Eukaryota</taxon>
        <taxon>Viridiplantae</taxon>
        <taxon>Streptophyta</taxon>
        <taxon>Embryophyta</taxon>
        <taxon>Tracheophyta</taxon>
        <taxon>Spermatophyta</taxon>
        <taxon>Magnoliopsida</taxon>
        <taxon>Liliopsida</taxon>
        <taxon>Poales</taxon>
        <taxon>Poaceae</taxon>
        <taxon>BOP clade</taxon>
        <taxon>Oryzoideae</taxon>
        <taxon>Oryzeae</taxon>
        <taxon>Oryzinae</taxon>
        <taxon>Oryza</taxon>
        <taxon>Oryza sativa</taxon>
    </lineage>
</organism>
<sequence>MDSIGINRAPLGSSSSAAAVTARRGIALRPARRSVASTNRVGVATIGFGDASGLRACSEKVRRFDSVRSTTARAQNGNAGRSMTEERGCTMSDTEMPFKYSSGKAFPLGVSQVEGGLNFALFSQHASSVILCLKLPGRGTEDEKGADVVEFVLDQQKNKTGDIWHVIVEGLPASGVLYGYRVGGPQGWDQGHRFDSSTVLLDPYAKLVSGRKYFGVAEEKSSQHFGTYDFDSSPFDWGDDYRLPNLPEADLVIYEMNVRAFTADESSGLDSTSRGSYLGLIDKIPHLLELGVNAVELLPVFEYDELEFKRYPNPRDHMVNTWGYSTINFFAPMSRYASAGGGPVAASKELKQMVKELHKAGIEVILDVVYNHTNEADDAHPYMTSFRGIDNKVYYMLDLNKNAELLNFSGCGNTLNCNHPVVKELILDSLRHWVEEYHIDGFRFDLASVLCRGPDGCPLDAPPLIKEIAKDAVLSRCKIIAEPWDCGGLYLVGRFPNWDRWAEWNGKYRDDLRRFIKGDPGMKGVFATRVSGSADLYQVNERKPYHGVNFVIAHDGFTLCDLVSYNLKHNDANGEGGCDGCNDNFSWNCGVEGETNDLNVLSLRSRQMKNFHVALMISQGTPMMLMGDEYGHTRYGNNNSYGHDTCINNFQWEQLEQRRDGHFRFFSEMIKFRHSNPILRRDRFLNKNDVTWHEDCWENQESKFLAFTVHDHNSGGDIYLAFNAHDYFVDAVIPPPPHHKCWNRVVDTNLESPNDIVPEGVPFTGPKYRIAPYSSILLKAKP</sequence>
<gene>
    <name evidence="6" type="primary">ISA3</name>
    <name evidence="10" type="ordered locus">Os09g0469400</name>
    <name evidence="7" type="ordered locus">LOC_Os09g29404</name>
    <name evidence="9" type="ORF">OJ1595_D08.13-1</name>
    <name evidence="11" type="ORF">OsJ_29702</name>
    <name evidence="8" type="ORF">P0676H02.31-1</name>
</gene>
<reference key="1">
    <citation type="journal article" date="2005" name="Nature">
        <title>The map-based sequence of the rice genome.</title>
        <authorList>
            <consortium name="International rice genome sequencing project (IRGSP)"/>
        </authorList>
    </citation>
    <scope>NUCLEOTIDE SEQUENCE [LARGE SCALE GENOMIC DNA]</scope>
    <source>
        <strain>cv. Nipponbare</strain>
    </source>
</reference>
<reference key="2">
    <citation type="journal article" date="2008" name="Nucleic Acids Res.">
        <title>The rice annotation project database (RAP-DB): 2008 update.</title>
        <authorList>
            <consortium name="The rice annotation project (RAP)"/>
        </authorList>
    </citation>
    <scope>GENOME REANNOTATION</scope>
    <source>
        <strain>cv. Nipponbare</strain>
    </source>
</reference>
<reference key="3">
    <citation type="journal article" date="2013" name="Rice">
        <title>Improvement of the Oryza sativa Nipponbare reference genome using next generation sequence and optical map data.</title>
        <authorList>
            <person name="Kawahara Y."/>
            <person name="de la Bastide M."/>
            <person name="Hamilton J.P."/>
            <person name="Kanamori H."/>
            <person name="McCombie W.R."/>
            <person name="Ouyang S."/>
            <person name="Schwartz D.C."/>
            <person name="Tanaka T."/>
            <person name="Wu J."/>
            <person name="Zhou S."/>
            <person name="Childs K.L."/>
            <person name="Davidson R.M."/>
            <person name="Lin H."/>
            <person name="Quesada-Ocampo L."/>
            <person name="Vaillancourt B."/>
            <person name="Sakai H."/>
            <person name="Lee S.S."/>
            <person name="Kim J."/>
            <person name="Numa H."/>
            <person name="Itoh T."/>
            <person name="Buell C.R."/>
            <person name="Matsumoto T."/>
        </authorList>
    </citation>
    <scope>GENOME REANNOTATION</scope>
    <source>
        <strain>cv. Nipponbare</strain>
    </source>
</reference>
<reference key="4">
    <citation type="journal article" date="2005" name="PLoS Biol.">
        <title>The genomes of Oryza sativa: a history of duplications.</title>
        <authorList>
            <person name="Yu J."/>
            <person name="Wang J."/>
            <person name="Lin W."/>
            <person name="Li S."/>
            <person name="Li H."/>
            <person name="Zhou J."/>
            <person name="Ni P."/>
            <person name="Dong W."/>
            <person name="Hu S."/>
            <person name="Zeng C."/>
            <person name="Zhang J."/>
            <person name="Zhang Y."/>
            <person name="Li R."/>
            <person name="Xu Z."/>
            <person name="Li S."/>
            <person name="Li X."/>
            <person name="Zheng H."/>
            <person name="Cong L."/>
            <person name="Lin L."/>
            <person name="Yin J."/>
            <person name="Geng J."/>
            <person name="Li G."/>
            <person name="Shi J."/>
            <person name="Liu J."/>
            <person name="Lv H."/>
            <person name="Li J."/>
            <person name="Wang J."/>
            <person name="Deng Y."/>
            <person name="Ran L."/>
            <person name="Shi X."/>
            <person name="Wang X."/>
            <person name="Wu Q."/>
            <person name="Li C."/>
            <person name="Ren X."/>
            <person name="Wang J."/>
            <person name="Wang X."/>
            <person name="Li D."/>
            <person name="Liu D."/>
            <person name="Zhang X."/>
            <person name="Ji Z."/>
            <person name="Zhao W."/>
            <person name="Sun Y."/>
            <person name="Zhang Z."/>
            <person name="Bao J."/>
            <person name="Han Y."/>
            <person name="Dong L."/>
            <person name="Ji J."/>
            <person name="Chen P."/>
            <person name="Wu S."/>
            <person name="Liu J."/>
            <person name="Xiao Y."/>
            <person name="Bu D."/>
            <person name="Tan J."/>
            <person name="Yang L."/>
            <person name="Ye C."/>
            <person name="Zhang J."/>
            <person name="Xu J."/>
            <person name="Zhou Y."/>
            <person name="Yu Y."/>
            <person name="Zhang B."/>
            <person name="Zhuang S."/>
            <person name="Wei H."/>
            <person name="Liu B."/>
            <person name="Lei M."/>
            <person name="Yu H."/>
            <person name="Li Y."/>
            <person name="Xu H."/>
            <person name="Wei S."/>
            <person name="He X."/>
            <person name="Fang L."/>
            <person name="Zhang Z."/>
            <person name="Zhang Y."/>
            <person name="Huang X."/>
            <person name="Su Z."/>
            <person name="Tong W."/>
            <person name="Li J."/>
            <person name="Tong Z."/>
            <person name="Li S."/>
            <person name="Ye J."/>
            <person name="Wang L."/>
            <person name="Fang L."/>
            <person name="Lei T."/>
            <person name="Chen C.-S."/>
            <person name="Chen H.-C."/>
            <person name="Xu Z."/>
            <person name="Li H."/>
            <person name="Huang H."/>
            <person name="Zhang F."/>
            <person name="Xu H."/>
            <person name="Li N."/>
            <person name="Zhao C."/>
            <person name="Li S."/>
            <person name="Dong L."/>
            <person name="Huang Y."/>
            <person name="Li L."/>
            <person name="Xi Y."/>
            <person name="Qi Q."/>
            <person name="Li W."/>
            <person name="Zhang B."/>
            <person name="Hu W."/>
            <person name="Zhang Y."/>
            <person name="Tian X."/>
            <person name="Jiao Y."/>
            <person name="Liang X."/>
            <person name="Jin J."/>
            <person name="Gao L."/>
            <person name="Zheng W."/>
            <person name="Hao B."/>
            <person name="Liu S.-M."/>
            <person name="Wang W."/>
            <person name="Yuan L."/>
            <person name="Cao M."/>
            <person name="McDermott J."/>
            <person name="Samudrala R."/>
            <person name="Wang J."/>
            <person name="Wong G.K.-S."/>
            <person name="Yang H."/>
        </authorList>
    </citation>
    <scope>NUCLEOTIDE SEQUENCE [LARGE SCALE GENOMIC DNA]</scope>
    <source>
        <strain>cv. Nipponbare</strain>
    </source>
</reference>
<reference key="5">
    <citation type="journal article" date="2003" name="Science">
        <title>Collection, mapping, and annotation of over 28,000 cDNA clones from japonica rice.</title>
        <authorList>
            <consortium name="The rice full-length cDNA consortium"/>
        </authorList>
    </citation>
    <scope>NUCLEOTIDE SEQUENCE [LARGE SCALE MRNA] OF 406-782</scope>
    <source>
        <strain>cv. Nipponbare</strain>
    </source>
</reference>
<reference key="6">
    <citation type="journal article" date="2005" name="Plant Physiol.">
        <title>Complementation of sugary-1 phenotype in rice endosperm with the wheat isoamylase1 gene supports a direct role for isoamylase1 in amylopectin biosynthesis.</title>
        <authorList>
            <person name="Kubo A."/>
            <person name="Rahman S."/>
            <person name="Utsumi Y."/>
            <person name="Li Z."/>
            <person name="Mukai Y."/>
            <person name="Yamamoto M."/>
            <person name="Ugaki M."/>
            <person name="Harada K."/>
            <person name="Satoh H."/>
            <person name="Konik-Rose C."/>
            <person name="Morell M."/>
            <person name="Nakamura Y."/>
        </authorList>
    </citation>
    <scope>TISSUE SPECIFICITY</scope>
</reference>
<reference key="7">
    <citation type="journal article" date="2011" name="Plant Cell Physiol.">
        <title>Rice debranching enzyme isoamylase3 facilitates starch metabolism and affects plastid morphogenesis.</title>
        <authorList>
            <person name="Yun M.S."/>
            <person name="Umemoto T."/>
            <person name="Kawagoe Y."/>
        </authorList>
    </citation>
    <scope>FUNCTION</scope>
    <scope>SUBCELLULAR LOCATION</scope>
</reference>
<keyword id="KW-0035">Amyloplast</keyword>
<keyword id="KW-0119">Carbohydrate metabolism</keyword>
<keyword id="KW-0150">Chloroplast</keyword>
<keyword id="KW-0326">Glycosidase</keyword>
<keyword id="KW-0378">Hydrolase</keyword>
<keyword id="KW-0934">Plastid</keyword>
<keyword id="KW-1185">Reference proteome</keyword>
<keyword id="KW-0750">Starch biosynthesis</keyword>
<keyword id="KW-0809">Transit peptide</keyword>
<name>ISOA3_ORYSJ</name>
<comment type="function">
    <text evidence="5">Starch-debranching enzyme that plays a role in the degradation of transitory starch during the night in leaf blades, facilitates the formation of spherical amyloplasts containing compound granules in the endosperm, and affects morphological characteristics of plastids.</text>
</comment>
<comment type="catalytic activity">
    <reaction evidence="5">
        <text>Hydrolysis of (1-&gt;6)-alpha-D-glucosidic branch linkages in glycogen, amylopectin and their beta-limit dextrins.</text>
        <dbReference type="EC" id="3.2.1.68"/>
    </reaction>
</comment>
<comment type="subcellular location">
    <subcellularLocation>
        <location evidence="2">Plastid</location>
        <location evidence="2">Chloroplast</location>
    </subcellularLocation>
    <subcellularLocation>
        <location evidence="5">Plastid</location>
        <location evidence="5">Amyloplast</location>
    </subcellularLocation>
    <text evidence="5">Localizes in amyloplast stroma of seed endosperm.</text>
</comment>
<comment type="tissue specificity">
    <text evidence="4">Expressed in leaves. Expressed at low levels in developing endosperm.</text>
</comment>
<comment type="similarity">
    <text evidence="7">Belongs to the glycosyl hydrolase 13 family.</text>
</comment>
<comment type="sequence caution" evidence="7">
    <conflict type="erroneous gene model prediction">
        <sequence resource="EMBL-CDS" id="BAD19754"/>
    </conflict>
</comment>
<comment type="sequence caution" evidence="7">
    <conflict type="erroneous gene model prediction">
        <sequence resource="EMBL-CDS" id="BAD22265"/>
    </conflict>
</comment>
<comment type="sequence caution" evidence="7">
    <conflict type="erroneous gene model prediction">
        <sequence resource="EMBL-CDS" id="BAF25347"/>
    </conflict>
</comment>
<comment type="sequence caution" evidence="7">
    <conflict type="erroneous gene model prediction">
        <sequence resource="EMBL-CDS" id="BAT08543"/>
    </conflict>
</comment>